<dbReference type="EMBL" id="FM180568">
    <property type="protein sequence ID" value="CAS11767.1"/>
    <property type="molecule type" value="Genomic_DNA"/>
</dbReference>
<dbReference type="RefSeq" id="WP_001076747.1">
    <property type="nucleotide sequence ID" value="NC_011601.1"/>
</dbReference>
<dbReference type="SMR" id="B7UNN5"/>
<dbReference type="KEGG" id="ecg:E2348C_4219"/>
<dbReference type="HOGENOM" id="CLU_013430_3_0_6"/>
<dbReference type="Proteomes" id="UP000008205">
    <property type="component" value="Chromosome"/>
</dbReference>
<dbReference type="GO" id="GO:0005886">
    <property type="term" value="C:plasma membrane"/>
    <property type="evidence" value="ECO:0007669"/>
    <property type="project" value="UniProtKB-SubCell"/>
</dbReference>
<dbReference type="GO" id="GO:0015086">
    <property type="term" value="F:cadmium ion transmembrane transporter activity"/>
    <property type="evidence" value="ECO:0007669"/>
    <property type="project" value="UniProtKB-UniRule"/>
</dbReference>
<dbReference type="GO" id="GO:0015093">
    <property type="term" value="F:ferrous iron transmembrane transporter activity"/>
    <property type="evidence" value="ECO:0007669"/>
    <property type="project" value="TreeGrafter"/>
</dbReference>
<dbReference type="GO" id="GO:0046872">
    <property type="term" value="F:metal ion binding"/>
    <property type="evidence" value="ECO:0007669"/>
    <property type="project" value="UniProtKB-KW"/>
</dbReference>
<dbReference type="GO" id="GO:0015341">
    <property type="term" value="F:zinc efflux antiporter activity"/>
    <property type="evidence" value="ECO:0007669"/>
    <property type="project" value="TreeGrafter"/>
</dbReference>
<dbReference type="GO" id="GO:0006882">
    <property type="term" value="P:intracellular zinc ion homeostasis"/>
    <property type="evidence" value="ECO:0007669"/>
    <property type="project" value="TreeGrafter"/>
</dbReference>
<dbReference type="FunFam" id="1.20.1510.10:FF:000001">
    <property type="entry name" value="Ferrous-iron efflux pump FieF"/>
    <property type="match status" value="1"/>
</dbReference>
<dbReference type="FunFam" id="3.30.70.1350:FF:000002">
    <property type="entry name" value="Ferrous-iron efflux pump FieF"/>
    <property type="match status" value="1"/>
</dbReference>
<dbReference type="Gene3D" id="1.20.1510.10">
    <property type="entry name" value="Cation efflux protein transmembrane domain"/>
    <property type="match status" value="1"/>
</dbReference>
<dbReference type="Gene3D" id="3.30.70.1350">
    <property type="entry name" value="Cation efflux protein, cytoplasmic domain"/>
    <property type="match status" value="1"/>
</dbReference>
<dbReference type="HAMAP" id="MF_01425">
    <property type="entry name" value="Cation_efflux_FieF"/>
    <property type="match status" value="1"/>
</dbReference>
<dbReference type="InterPro" id="IPR002524">
    <property type="entry name" value="Cation_efflux"/>
</dbReference>
<dbReference type="InterPro" id="IPR027470">
    <property type="entry name" value="Cation_efflux_CTD"/>
</dbReference>
<dbReference type="InterPro" id="IPR036837">
    <property type="entry name" value="Cation_efflux_CTD_sf"/>
</dbReference>
<dbReference type="InterPro" id="IPR023783">
    <property type="entry name" value="Cation_efflux_FieF"/>
</dbReference>
<dbReference type="InterPro" id="IPR027469">
    <property type="entry name" value="Cation_efflux_TMD_sf"/>
</dbReference>
<dbReference type="InterPro" id="IPR050291">
    <property type="entry name" value="CDF_Transporter"/>
</dbReference>
<dbReference type="NCBIfam" id="TIGR01297">
    <property type="entry name" value="CDF"/>
    <property type="match status" value="1"/>
</dbReference>
<dbReference type="NCBIfam" id="NF007064">
    <property type="entry name" value="PRK09509.1"/>
    <property type="match status" value="1"/>
</dbReference>
<dbReference type="PANTHER" id="PTHR43840:SF41">
    <property type="entry name" value="CATION-EFFLUX PUMP FIEF"/>
    <property type="match status" value="1"/>
</dbReference>
<dbReference type="PANTHER" id="PTHR43840">
    <property type="entry name" value="MITOCHONDRIAL METAL TRANSPORTER 1-RELATED"/>
    <property type="match status" value="1"/>
</dbReference>
<dbReference type="Pfam" id="PF01545">
    <property type="entry name" value="Cation_efflux"/>
    <property type="match status" value="1"/>
</dbReference>
<dbReference type="Pfam" id="PF16916">
    <property type="entry name" value="ZT_dimer"/>
    <property type="match status" value="1"/>
</dbReference>
<dbReference type="SUPFAM" id="SSF160240">
    <property type="entry name" value="Cation efflux protein cytoplasmic domain-like"/>
    <property type="match status" value="1"/>
</dbReference>
<dbReference type="SUPFAM" id="SSF161111">
    <property type="entry name" value="Cation efflux protein transmembrane domain-like"/>
    <property type="match status" value="1"/>
</dbReference>
<name>FIEF_ECO27</name>
<organism>
    <name type="scientific">Escherichia coli O127:H6 (strain E2348/69 / EPEC)</name>
    <dbReference type="NCBI Taxonomy" id="574521"/>
    <lineage>
        <taxon>Bacteria</taxon>
        <taxon>Pseudomonadati</taxon>
        <taxon>Pseudomonadota</taxon>
        <taxon>Gammaproteobacteria</taxon>
        <taxon>Enterobacterales</taxon>
        <taxon>Enterobacteriaceae</taxon>
        <taxon>Escherichia</taxon>
    </lineage>
</organism>
<accession>B7UNN5</accession>
<gene>
    <name evidence="1" type="primary">fieF</name>
    <name type="ordered locus">E2348C_4219</name>
</gene>
<comment type="function">
    <text evidence="1">Divalent metal cation transporter which exports Zn(2+), Cd(2+) and possibly Fe(2+). May be involved in zinc and iron detoxification by efflux.</text>
</comment>
<comment type="catalytic activity">
    <reaction evidence="1">
        <text>Zn(2+)(in) + H(+)(out) = Zn(2+)(out) + H(+)(in)</text>
        <dbReference type="Rhea" id="RHEA:28839"/>
        <dbReference type="ChEBI" id="CHEBI:15378"/>
        <dbReference type="ChEBI" id="CHEBI:29105"/>
    </reaction>
</comment>
<comment type="catalytic activity">
    <reaction evidence="1">
        <text>Cd(2+)(in) + H(+)(out) = Cd(2+)(out) + H(+)(in)</text>
        <dbReference type="Rhea" id="RHEA:28739"/>
        <dbReference type="ChEBI" id="CHEBI:15378"/>
        <dbReference type="ChEBI" id="CHEBI:48775"/>
    </reaction>
</comment>
<comment type="catalytic activity">
    <reaction evidence="1">
        <text>Fe(2+)(in) + H(+)(out) = Fe(2+)(out) + H(+)(in)</text>
        <dbReference type="Rhea" id="RHEA:29439"/>
        <dbReference type="ChEBI" id="CHEBI:15378"/>
        <dbReference type="ChEBI" id="CHEBI:29033"/>
    </reaction>
</comment>
<comment type="subunit">
    <text evidence="1">Homodimer.</text>
</comment>
<comment type="subcellular location">
    <subcellularLocation>
        <location evidence="1">Cell inner membrane</location>
        <topology evidence="1">Multi-pass membrane protein</topology>
    </subcellularLocation>
</comment>
<comment type="similarity">
    <text evidence="1">Belongs to the cation diffusion facilitator (CDF) transporter (TC 2.A.4) family. FieF subfamily.</text>
</comment>
<keyword id="KW-0997">Cell inner membrane</keyword>
<keyword id="KW-1003">Cell membrane</keyword>
<keyword id="KW-0406">Ion transport</keyword>
<keyword id="KW-0408">Iron</keyword>
<keyword id="KW-0410">Iron transport</keyword>
<keyword id="KW-0472">Membrane</keyword>
<keyword id="KW-0479">Metal-binding</keyword>
<keyword id="KW-1185">Reference proteome</keyword>
<keyword id="KW-0812">Transmembrane</keyword>
<keyword id="KW-1133">Transmembrane helix</keyword>
<keyword id="KW-0813">Transport</keyword>
<keyword id="KW-0862">Zinc</keyword>
<keyword id="KW-0864">Zinc transport</keyword>
<proteinExistence type="inferred from homology"/>
<protein>
    <recommendedName>
        <fullName evidence="1">Cation-efflux pump FieF</fullName>
    </recommendedName>
</protein>
<reference key="1">
    <citation type="journal article" date="2009" name="J. Bacteriol.">
        <title>Complete genome sequence and comparative genome analysis of enteropathogenic Escherichia coli O127:H6 strain E2348/69.</title>
        <authorList>
            <person name="Iguchi A."/>
            <person name="Thomson N.R."/>
            <person name="Ogura Y."/>
            <person name="Saunders D."/>
            <person name="Ooka T."/>
            <person name="Henderson I.R."/>
            <person name="Harris D."/>
            <person name="Asadulghani M."/>
            <person name="Kurokawa K."/>
            <person name="Dean P."/>
            <person name="Kenny B."/>
            <person name="Quail M.A."/>
            <person name="Thurston S."/>
            <person name="Dougan G."/>
            <person name="Hayashi T."/>
            <person name="Parkhill J."/>
            <person name="Frankel G."/>
        </authorList>
    </citation>
    <scope>NUCLEOTIDE SEQUENCE [LARGE SCALE GENOMIC DNA]</scope>
    <source>
        <strain>E2348/69 / EPEC</strain>
    </source>
</reference>
<sequence>MNQSYGRLVSRAAIAATAMASLLLLIKIFAWWYTGSVSILAALVDSLVDIGASLTNLLVVRYSLQPADDNHSFGHGKAESLAALAQSMFISGSALFLFLTGIQHLVSPTPMTDPGVGVIVTIVALICTIILVSFQRWVVRRTQSQAVRADMLHYQSDVMMNGAILLALGLSWYGWHRADALFALGIGIYILYSALRMGYEAVQSLLDRALPDEERQEIIDIVASWPGVSGAHDLRTRQSGPTRFIQIHLEMEDSLPLVQAHMVADQVEQAILRRFPGSDVIIHQDPCSVVPREGKRSMLS</sequence>
<evidence type="ECO:0000255" key="1">
    <source>
        <dbReference type="HAMAP-Rule" id="MF_01425"/>
    </source>
</evidence>
<feature type="chain" id="PRO_1000184872" description="Cation-efflux pump FieF">
    <location>
        <begin position="1"/>
        <end position="300"/>
    </location>
</feature>
<feature type="transmembrane region" description="Helical" evidence="1">
    <location>
        <begin position="12"/>
        <end position="32"/>
    </location>
</feature>
<feature type="transmembrane region" description="Helical" evidence="1">
    <location>
        <begin position="39"/>
        <end position="59"/>
    </location>
</feature>
<feature type="transmembrane region" description="Helical" evidence="1">
    <location>
        <begin position="82"/>
        <end position="102"/>
    </location>
</feature>
<feature type="transmembrane region" description="Helical" evidence="1">
    <location>
        <begin position="114"/>
        <end position="134"/>
    </location>
</feature>
<feature type="transmembrane region" description="Helical" evidence="1">
    <location>
        <begin position="156"/>
        <end position="176"/>
    </location>
</feature>
<feature type="transmembrane region" description="Helical" evidence="1">
    <location>
        <begin position="178"/>
        <end position="198"/>
    </location>
</feature>
<feature type="binding site" evidence="1">
    <location>
        <position position="45"/>
    </location>
    <ligand>
        <name>Zn(2+)</name>
        <dbReference type="ChEBI" id="CHEBI:29105"/>
    </ligand>
</feature>
<feature type="binding site" evidence="1">
    <location>
        <position position="49"/>
    </location>
    <ligand>
        <name>Zn(2+)</name>
        <dbReference type="ChEBI" id="CHEBI:29105"/>
    </ligand>
</feature>
<feature type="binding site" evidence="1">
    <location>
        <position position="153"/>
    </location>
    <ligand>
        <name>Zn(2+)</name>
        <dbReference type="ChEBI" id="CHEBI:29105"/>
    </ligand>
</feature>
<feature type="binding site" evidence="1">
    <location>
        <position position="157"/>
    </location>
    <ligand>
        <name>Zn(2+)</name>
        <dbReference type="ChEBI" id="CHEBI:29105"/>
    </ligand>
</feature>